<organism>
    <name type="scientific">Pelagibacter ubique (strain HTCC1062)</name>
    <dbReference type="NCBI Taxonomy" id="335992"/>
    <lineage>
        <taxon>Bacteria</taxon>
        <taxon>Pseudomonadati</taxon>
        <taxon>Pseudomonadota</taxon>
        <taxon>Alphaproteobacteria</taxon>
        <taxon>Candidatus Pelagibacterales</taxon>
        <taxon>Candidatus Pelagibacteraceae</taxon>
        <taxon>Candidatus Pelagibacter</taxon>
    </lineage>
</organism>
<name>MNMG_PELUB</name>
<sequence>MKNDLSFEVVVIGGGHAGCEAAAASARLGINTALFTHKIETIGEMSCNPAIGGLGKGHLVRELDALDGVMGDVADKSGIQFRLLNRSRGPAVQGPRTQSDRSLYRKYMQEKLLNYCNLSVFSDPVIKFIFNKNTISGFETNSGKKILCGKLILTTGTFLNGLIHIGDERTPAGRFNEKPSTGLSEQLEKYDFKIGRLKTGTPPRLDARTIKYDNLEEQFADEDPYFFSFLTKKNLNKQISCRMTYTNEKVHKIIQKNLKRSAMYSGSIQGVGPRYCPSIEDKIVKFADKDRHQIYLEPEGLNDHTIYPNGISTSLPEDVQQEICNNISGLENVKIIRPGYAIEYDYIDPRELFLTLETKKIQNLYLAGQINGTTGYEEAAAQGLIAGINAALSFKKQEPFILDRSDAYIGVMIDDLVTKGVAEPYRMFTSRAEYRLSLRADNADQRLTNKGIEIGLISKEREDIFKDKEKKLGIISKIMGESLISPTKIKSFNIKIAKDGILRKSNEILTQKGVNMKKIREIWPEIPYFDKKIDEQIEINAHYRGYLKKQKADILAFKRDENLVIPENVNYDDLSGLSNEVKAKFNQIKPKTMGQALRIDGITPAAVYILLSHVKRKSIKLIA</sequence>
<gene>
    <name evidence="1" type="primary">mnmG</name>
    <name evidence="1" type="synonym">gidA</name>
    <name type="ordered locus">SAR11_0351</name>
</gene>
<comment type="function">
    <text evidence="1">NAD-binding protein involved in the addition of a carboxymethylaminomethyl (cmnm) group at the wobble position (U34) of certain tRNAs, forming tRNA-cmnm(5)s(2)U34.</text>
</comment>
<comment type="cofactor">
    <cofactor evidence="1">
        <name>FAD</name>
        <dbReference type="ChEBI" id="CHEBI:57692"/>
    </cofactor>
</comment>
<comment type="subunit">
    <text evidence="1">Homodimer. Heterotetramer of two MnmE and two MnmG subunits.</text>
</comment>
<comment type="subcellular location">
    <subcellularLocation>
        <location evidence="1">Cytoplasm</location>
    </subcellularLocation>
</comment>
<comment type="similarity">
    <text evidence="1">Belongs to the MnmG family.</text>
</comment>
<evidence type="ECO:0000255" key="1">
    <source>
        <dbReference type="HAMAP-Rule" id="MF_00129"/>
    </source>
</evidence>
<proteinExistence type="inferred from homology"/>
<dbReference type="EMBL" id="CP000084">
    <property type="protein sequence ID" value="AAZ21173.1"/>
    <property type="molecule type" value="Genomic_DNA"/>
</dbReference>
<dbReference type="RefSeq" id="WP_011281643.1">
    <property type="nucleotide sequence ID" value="NC_007205.1"/>
</dbReference>
<dbReference type="SMR" id="Q4FNR6"/>
<dbReference type="STRING" id="335992.SAR11_0351"/>
<dbReference type="GeneID" id="66294849"/>
<dbReference type="KEGG" id="pub:SAR11_0351"/>
<dbReference type="eggNOG" id="COG0445">
    <property type="taxonomic scope" value="Bacteria"/>
</dbReference>
<dbReference type="HOGENOM" id="CLU_007831_2_2_5"/>
<dbReference type="OrthoDB" id="9815560at2"/>
<dbReference type="Proteomes" id="UP000002528">
    <property type="component" value="Chromosome"/>
</dbReference>
<dbReference type="GO" id="GO:0005737">
    <property type="term" value="C:cytoplasm"/>
    <property type="evidence" value="ECO:0007669"/>
    <property type="project" value="UniProtKB-SubCell"/>
</dbReference>
<dbReference type="GO" id="GO:0050660">
    <property type="term" value="F:flavin adenine dinucleotide binding"/>
    <property type="evidence" value="ECO:0007669"/>
    <property type="project" value="UniProtKB-UniRule"/>
</dbReference>
<dbReference type="GO" id="GO:0030488">
    <property type="term" value="P:tRNA methylation"/>
    <property type="evidence" value="ECO:0007669"/>
    <property type="project" value="TreeGrafter"/>
</dbReference>
<dbReference type="GO" id="GO:0002098">
    <property type="term" value="P:tRNA wobble uridine modification"/>
    <property type="evidence" value="ECO:0007669"/>
    <property type="project" value="InterPro"/>
</dbReference>
<dbReference type="FunFam" id="3.50.50.60:FF:000082">
    <property type="entry name" value="protein MTO1 homolog, mitochondrial isoform X1"/>
    <property type="match status" value="1"/>
</dbReference>
<dbReference type="FunFam" id="1.10.150.570:FF:000001">
    <property type="entry name" value="tRNA uridine 5-carboxymethylaminomethyl modification enzyme MnmG"/>
    <property type="match status" value="1"/>
</dbReference>
<dbReference type="FunFam" id="3.50.50.60:FF:000002">
    <property type="entry name" value="tRNA uridine 5-carboxymethylaminomethyl modification enzyme MnmG"/>
    <property type="match status" value="1"/>
</dbReference>
<dbReference type="Gene3D" id="3.50.50.60">
    <property type="entry name" value="FAD/NAD(P)-binding domain"/>
    <property type="match status" value="2"/>
</dbReference>
<dbReference type="Gene3D" id="1.10.150.570">
    <property type="entry name" value="GidA associated domain, C-terminal subdomain"/>
    <property type="match status" value="1"/>
</dbReference>
<dbReference type="Gene3D" id="1.10.10.1800">
    <property type="entry name" value="tRNA uridine 5-carboxymethylaminomethyl modification enzyme MnmG/GidA"/>
    <property type="match status" value="1"/>
</dbReference>
<dbReference type="HAMAP" id="MF_00129">
    <property type="entry name" value="MnmG_GidA"/>
    <property type="match status" value="1"/>
</dbReference>
<dbReference type="InterPro" id="IPR036188">
    <property type="entry name" value="FAD/NAD-bd_sf"/>
</dbReference>
<dbReference type="InterPro" id="IPR049312">
    <property type="entry name" value="GIDA_C_N"/>
</dbReference>
<dbReference type="InterPro" id="IPR004416">
    <property type="entry name" value="MnmG"/>
</dbReference>
<dbReference type="InterPro" id="IPR002218">
    <property type="entry name" value="MnmG-rel"/>
</dbReference>
<dbReference type="InterPro" id="IPR020595">
    <property type="entry name" value="MnmG-rel_CS"/>
</dbReference>
<dbReference type="InterPro" id="IPR026904">
    <property type="entry name" value="MnmG_C"/>
</dbReference>
<dbReference type="InterPro" id="IPR047001">
    <property type="entry name" value="MnmG_C_subdom"/>
</dbReference>
<dbReference type="InterPro" id="IPR044920">
    <property type="entry name" value="MnmG_C_subdom_sf"/>
</dbReference>
<dbReference type="InterPro" id="IPR040131">
    <property type="entry name" value="MnmG_N"/>
</dbReference>
<dbReference type="NCBIfam" id="TIGR00136">
    <property type="entry name" value="mnmG_gidA"/>
    <property type="match status" value="1"/>
</dbReference>
<dbReference type="PANTHER" id="PTHR11806">
    <property type="entry name" value="GLUCOSE INHIBITED DIVISION PROTEIN A"/>
    <property type="match status" value="1"/>
</dbReference>
<dbReference type="PANTHER" id="PTHR11806:SF0">
    <property type="entry name" value="PROTEIN MTO1 HOMOLOG, MITOCHONDRIAL"/>
    <property type="match status" value="1"/>
</dbReference>
<dbReference type="Pfam" id="PF01134">
    <property type="entry name" value="GIDA"/>
    <property type="match status" value="1"/>
</dbReference>
<dbReference type="Pfam" id="PF21680">
    <property type="entry name" value="GIDA_C_1st"/>
    <property type="match status" value="1"/>
</dbReference>
<dbReference type="Pfam" id="PF13932">
    <property type="entry name" value="SAM_GIDA_C"/>
    <property type="match status" value="1"/>
</dbReference>
<dbReference type="SMART" id="SM01228">
    <property type="entry name" value="GIDA_assoc_3"/>
    <property type="match status" value="1"/>
</dbReference>
<dbReference type="SUPFAM" id="SSF51905">
    <property type="entry name" value="FAD/NAD(P)-binding domain"/>
    <property type="match status" value="1"/>
</dbReference>
<dbReference type="PROSITE" id="PS01280">
    <property type="entry name" value="GIDA_1"/>
    <property type="match status" value="1"/>
</dbReference>
<dbReference type="PROSITE" id="PS01281">
    <property type="entry name" value="GIDA_2"/>
    <property type="match status" value="1"/>
</dbReference>
<accession>Q4FNR6</accession>
<protein>
    <recommendedName>
        <fullName evidence="1">tRNA uridine 5-carboxymethylaminomethyl modification enzyme MnmG</fullName>
    </recommendedName>
    <alternativeName>
        <fullName evidence="1">Glucose-inhibited division protein A</fullName>
    </alternativeName>
</protein>
<feature type="chain" id="PRO_0000117079" description="tRNA uridine 5-carboxymethylaminomethyl modification enzyme MnmG">
    <location>
        <begin position="1"/>
        <end position="623"/>
    </location>
</feature>
<feature type="binding site" evidence="1">
    <location>
        <begin position="13"/>
        <end position="18"/>
    </location>
    <ligand>
        <name>FAD</name>
        <dbReference type="ChEBI" id="CHEBI:57692"/>
    </ligand>
</feature>
<feature type="binding site" evidence="1">
    <location>
        <position position="125"/>
    </location>
    <ligand>
        <name>FAD</name>
        <dbReference type="ChEBI" id="CHEBI:57692"/>
    </ligand>
</feature>
<feature type="binding site" evidence="1">
    <location>
        <position position="180"/>
    </location>
    <ligand>
        <name>FAD</name>
        <dbReference type="ChEBI" id="CHEBI:57692"/>
    </ligand>
</feature>
<feature type="binding site" evidence="1">
    <location>
        <begin position="272"/>
        <end position="286"/>
    </location>
    <ligand>
        <name>NAD(+)</name>
        <dbReference type="ChEBI" id="CHEBI:57540"/>
    </ligand>
</feature>
<feature type="binding site" evidence="1">
    <location>
        <position position="369"/>
    </location>
    <ligand>
        <name>FAD</name>
        <dbReference type="ChEBI" id="CHEBI:57692"/>
    </ligand>
</feature>
<reference key="1">
    <citation type="journal article" date="2005" name="Science">
        <title>Genome streamlining in a cosmopolitan oceanic bacterium.</title>
        <authorList>
            <person name="Giovannoni S.J."/>
            <person name="Tripp H.J."/>
            <person name="Givan S."/>
            <person name="Podar M."/>
            <person name="Vergin K.L."/>
            <person name="Baptista D."/>
            <person name="Bibbs L."/>
            <person name="Eads J."/>
            <person name="Richardson T.H."/>
            <person name="Noordewier M."/>
            <person name="Rappe M.S."/>
            <person name="Short J.M."/>
            <person name="Carrington J.C."/>
            <person name="Mathur E.J."/>
        </authorList>
    </citation>
    <scope>NUCLEOTIDE SEQUENCE [LARGE SCALE GENOMIC DNA]</scope>
    <source>
        <strain>HTCC1062</strain>
    </source>
</reference>
<keyword id="KW-0963">Cytoplasm</keyword>
<keyword id="KW-0274">FAD</keyword>
<keyword id="KW-0285">Flavoprotein</keyword>
<keyword id="KW-0520">NAD</keyword>
<keyword id="KW-1185">Reference proteome</keyword>
<keyword id="KW-0819">tRNA processing</keyword>